<accession>Q9JUT8</accession>
<accession>A1IRF8</accession>
<proteinExistence type="inferred from homology"/>
<gene>
    <name evidence="1" type="primary">rpmE2</name>
    <name type="ordered locus">NMA1138</name>
</gene>
<evidence type="ECO:0000255" key="1">
    <source>
        <dbReference type="HAMAP-Rule" id="MF_00502"/>
    </source>
</evidence>
<evidence type="ECO:0000305" key="2"/>
<reference key="1">
    <citation type="journal article" date="2000" name="Nature">
        <title>Complete DNA sequence of a serogroup A strain of Neisseria meningitidis Z2491.</title>
        <authorList>
            <person name="Parkhill J."/>
            <person name="Achtman M."/>
            <person name="James K.D."/>
            <person name="Bentley S.D."/>
            <person name="Churcher C.M."/>
            <person name="Klee S.R."/>
            <person name="Morelli G."/>
            <person name="Basham D."/>
            <person name="Brown D."/>
            <person name="Chillingworth T."/>
            <person name="Davies R.M."/>
            <person name="Davis P."/>
            <person name="Devlin K."/>
            <person name="Feltwell T."/>
            <person name="Hamlin N."/>
            <person name="Holroyd S."/>
            <person name="Jagels K."/>
            <person name="Leather S."/>
            <person name="Moule S."/>
            <person name="Mungall K.L."/>
            <person name="Quail M.A."/>
            <person name="Rajandream M.A."/>
            <person name="Rutherford K.M."/>
            <person name="Simmonds M."/>
            <person name="Skelton J."/>
            <person name="Whitehead S."/>
            <person name="Spratt B.G."/>
            <person name="Barrell B.G."/>
        </authorList>
    </citation>
    <scope>NUCLEOTIDE SEQUENCE [LARGE SCALE GENOMIC DNA]</scope>
    <source>
        <strain>DSM 15465 / Z2491</strain>
    </source>
</reference>
<protein>
    <recommendedName>
        <fullName evidence="1">Large ribosomal subunit protein bL31B</fullName>
    </recommendedName>
    <alternativeName>
        <fullName evidence="2">50S ribosomal protein L31 type B</fullName>
    </alternativeName>
</protein>
<keyword id="KW-0687">Ribonucleoprotein</keyword>
<keyword id="KW-0689">Ribosomal protein</keyword>
<sequence length="91" mass="10446">MKPNIHPDNYRTVLFFDSSANEGWLIRSCAETHGKTMVWTDGKEYPLFSLDTSSASHPVYTGKQRNVNTEGHASKFNQRFQSVMSSFRKDK</sequence>
<name>RL31B_NEIMA</name>
<feature type="chain" id="PRO_0000173239" description="Large ribosomal subunit protein bL31B">
    <location>
        <begin position="1"/>
        <end position="91"/>
    </location>
</feature>
<organism>
    <name type="scientific">Neisseria meningitidis serogroup A / serotype 4A (strain DSM 15465 / Z2491)</name>
    <dbReference type="NCBI Taxonomy" id="122587"/>
    <lineage>
        <taxon>Bacteria</taxon>
        <taxon>Pseudomonadati</taxon>
        <taxon>Pseudomonadota</taxon>
        <taxon>Betaproteobacteria</taxon>
        <taxon>Neisseriales</taxon>
        <taxon>Neisseriaceae</taxon>
        <taxon>Neisseria</taxon>
    </lineage>
</organism>
<comment type="subunit">
    <text evidence="1">Part of the 50S ribosomal subunit.</text>
</comment>
<comment type="similarity">
    <text evidence="1">Belongs to the bacterial ribosomal protein bL31 family. Type B subfamily.</text>
</comment>
<dbReference type="EMBL" id="AL157959">
    <property type="protein sequence ID" value="CAM08344.1"/>
    <property type="molecule type" value="Genomic_DNA"/>
</dbReference>
<dbReference type="PIR" id="E81880">
    <property type="entry name" value="E81880"/>
</dbReference>
<dbReference type="RefSeq" id="WP_010981167.1">
    <property type="nucleotide sequence ID" value="NC_003116.1"/>
</dbReference>
<dbReference type="SMR" id="Q9JUT8"/>
<dbReference type="EnsemblBacteria" id="CAM08344">
    <property type="protein sequence ID" value="CAM08344"/>
    <property type="gene ID" value="NMA1138"/>
</dbReference>
<dbReference type="KEGG" id="nma:NMA1138"/>
<dbReference type="HOGENOM" id="CLU_114306_2_1_4"/>
<dbReference type="Proteomes" id="UP000000626">
    <property type="component" value="Chromosome"/>
</dbReference>
<dbReference type="GO" id="GO:1990904">
    <property type="term" value="C:ribonucleoprotein complex"/>
    <property type="evidence" value="ECO:0007669"/>
    <property type="project" value="UniProtKB-KW"/>
</dbReference>
<dbReference type="GO" id="GO:0005840">
    <property type="term" value="C:ribosome"/>
    <property type="evidence" value="ECO:0007669"/>
    <property type="project" value="UniProtKB-KW"/>
</dbReference>
<dbReference type="GO" id="GO:0003735">
    <property type="term" value="F:structural constituent of ribosome"/>
    <property type="evidence" value="ECO:0007669"/>
    <property type="project" value="InterPro"/>
</dbReference>
<dbReference type="GO" id="GO:0006412">
    <property type="term" value="P:translation"/>
    <property type="evidence" value="ECO:0007669"/>
    <property type="project" value="UniProtKB-UniRule"/>
</dbReference>
<dbReference type="Gene3D" id="4.10.830.30">
    <property type="entry name" value="Ribosomal protein L31"/>
    <property type="match status" value="1"/>
</dbReference>
<dbReference type="HAMAP" id="MF_00502">
    <property type="entry name" value="Ribosomal_bL31_2"/>
    <property type="match status" value="1"/>
</dbReference>
<dbReference type="InterPro" id="IPR034704">
    <property type="entry name" value="Ribosomal_bL28/bL31-like_sf"/>
</dbReference>
<dbReference type="InterPro" id="IPR002150">
    <property type="entry name" value="Ribosomal_bL31"/>
</dbReference>
<dbReference type="InterPro" id="IPR027493">
    <property type="entry name" value="Ribosomal_bL31_B"/>
</dbReference>
<dbReference type="InterPro" id="IPR042105">
    <property type="entry name" value="Ribosomal_bL31_sf"/>
</dbReference>
<dbReference type="NCBIfam" id="TIGR00105">
    <property type="entry name" value="L31"/>
    <property type="match status" value="1"/>
</dbReference>
<dbReference type="NCBIfam" id="NF002462">
    <property type="entry name" value="PRK01678.1"/>
    <property type="match status" value="1"/>
</dbReference>
<dbReference type="Pfam" id="PF01197">
    <property type="entry name" value="Ribosomal_L31"/>
    <property type="match status" value="1"/>
</dbReference>
<dbReference type="PRINTS" id="PR01249">
    <property type="entry name" value="RIBOSOMALL31"/>
</dbReference>
<dbReference type="SUPFAM" id="SSF143800">
    <property type="entry name" value="L28p-like"/>
    <property type="match status" value="1"/>
</dbReference>
<dbReference type="PROSITE" id="PS01143">
    <property type="entry name" value="RIBOSOMAL_L31"/>
    <property type="match status" value="1"/>
</dbReference>